<sequence length="1131" mass="125578">MTDVSSPAGGAASPVEMATSSSSAATTLTNGANKTAISTAAGVAPGAVPGPGSAAIPASSSSGNQVKLEHHHRQSNNNRPAATNRSSETKLRSPAGESDGASRLMTPAGSSSTPSQSPSPSQSPSQASIQTQTSQQDRLAKASTTASQQDVDEVARLFEEKPEAFEKWLTERAPPEALSRLQEFIENRKPHKRPSVTSDLFQQWMAASPTVQQKSPRSLSNSSASSIPECRRHLMDLDEGELFMELIRDVANELDIDVLCHKILVNVGLLTHADRGSLFLAKGTPTNKYLVAKLFDVTQKTALKDAVTRASAEEIIIPFGIGIAGMVAQTKQMINIKEAYKDARFNCEIDLKTGYKTNAILCMPICNYEGDIIGVAQIINKTNGGCFKGCMEFDEHDVEIFRRYLTFCGIGIQNAQLFEMSVQEYRRNQILLNLARSIFEEQNNLECLVTKIMTEARELLKCERCSVFLVDLDCCEASHLEKIIEKPNQPATRAIKSADSFEEKKMRNRFTVLFELGGEYQAANVSRPSVSELSSSTLAQIAQFVATTGQTVNICDVIEWVRDHNQIRAEDEIDSTQAILCMPIMNAQKKVIGVAQLINKANGVPFTDSDASIFEAFAIFCGLGIHNTQMYENACKLMAKQKVALECLSYHATASQDQTEKLTQDVIAEAESYNLYSFTFTDFELVDDDTCRAVLRMFMQCNLVSQFQIPYDVLCRWVLSVRKNYRPVKYHNWRHALNVAQTMFAMLKTGKMERFMTDLEILGLLVACLCHDLDHRGTNNAFQTKTESPLAILYTTSTMEHHHFDQCVMILNSEGNNIFQALSPEDYRSVMKTVESAILSTDLAMYFKKRNAFLELVENGEFDWQGEEKKDLLCGMMMTACDVSAIAKPWEVQHKVAKLVADEFFDQGDLEKLQLNTQPVAMMDRERKDELPKMQVGFIDVICLPLYRVLCDTFPWITPLYEGTLENRRNWQDLAEKVEMGLTWIDHDTIDKPVEEFAACADEEIKDIEFTVTTLNCNQQSQHGSEDSHTPEHQRSGSRLSMKKTGALGKAVRSKLSKTLYNSMDGSKPKTSLKLLESHVSEDMDDKSPTSPSQPQASGSMGRMSASSSTSSAGGQMVDKSKKRSKLCALL</sequence>
<protein>
    <recommendedName>
        <fullName evidence="2">cGMP-specific 3',5'-cyclic phosphodiesterase</fullName>
        <ecNumber>3.1.4.35</ecNumber>
    </recommendedName>
</protein>
<organism>
    <name type="scientific">Drosophila erecta</name>
    <name type="common">Fruit fly</name>
    <dbReference type="NCBI Taxonomy" id="7220"/>
    <lineage>
        <taxon>Eukaryota</taxon>
        <taxon>Metazoa</taxon>
        <taxon>Ecdysozoa</taxon>
        <taxon>Arthropoda</taxon>
        <taxon>Hexapoda</taxon>
        <taxon>Insecta</taxon>
        <taxon>Pterygota</taxon>
        <taxon>Neoptera</taxon>
        <taxon>Endopterygota</taxon>
        <taxon>Diptera</taxon>
        <taxon>Brachycera</taxon>
        <taxon>Muscomorpha</taxon>
        <taxon>Ephydroidea</taxon>
        <taxon>Drosophilidae</taxon>
        <taxon>Drosophila</taxon>
        <taxon>Sophophora</taxon>
    </lineage>
</organism>
<comment type="function">
    <text evidence="2">Has a role regulating cGMP transport in Malpighian tubule principal cells.</text>
</comment>
<comment type="catalytic activity">
    <reaction evidence="2">
        <text>3',5'-cyclic GMP + H2O = GMP + H(+)</text>
        <dbReference type="Rhea" id="RHEA:16957"/>
        <dbReference type="ChEBI" id="CHEBI:15377"/>
        <dbReference type="ChEBI" id="CHEBI:15378"/>
        <dbReference type="ChEBI" id="CHEBI:57746"/>
        <dbReference type="ChEBI" id="CHEBI:58115"/>
        <dbReference type="EC" id="3.1.4.35"/>
    </reaction>
</comment>
<comment type="cofactor">
    <cofactor evidence="1">
        <name>a divalent metal cation</name>
        <dbReference type="ChEBI" id="CHEBI:60240"/>
    </cofactor>
    <text evidence="1">Binds 2 divalent metal cations per subunit. Site 1 may preferentially bind zinc ions, while site 2 has a preference for magnesium and/or manganese ions.</text>
</comment>
<comment type="subunit">
    <text evidence="2">Interacts with PrBP.</text>
</comment>
<comment type="subcellular location">
    <subcellularLocation>
        <location evidence="2">Cell membrane</location>
        <topology evidence="2">Lipid-anchor</topology>
        <orientation evidence="2">Cytoplasmic side</orientation>
    </subcellularLocation>
</comment>
<comment type="similarity">
    <text evidence="3">Belongs to the cyclic nucleotide phosphodiesterase family.</text>
</comment>
<dbReference type="EC" id="3.1.4.35"/>
<dbReference type="EMBL" id="CH954181">
    <property type="protein sequence ID" value="EDV48890.1"/>
    <property type="molecule type" value="Genomic_DNA"/>
</dbReference>
<dbReference type="RefSeq" id="XP_001979932.2">
    <property type="nucleotide sequence ID" value="XM_001979896.2"/>
</dbReference>
<dbReference type="SMR" id="B3P3K2"/>
<dbReference type="GeneID" id="6552139"/>
<dbReference type="KEGG" id="der:6552139"/>
<dbReference type="eggNOG" id="KOG3689">
    <property type="taxonomic scope" value="Eukaryota"/>
</dbReference>
<dbReference type="HOGENOM" id="CLU_006980_0_2_1"/>
<dbReference type="OMA" id="FHIPYEV"/>
<dbReference type="OrthoDB" id="74705at2759"/>
<dbReference type="PhylomeDB" id="B3P3K2"/>
<dbReference type="ChiTaRS" id="Pde6">
    <property type="organism name" value="fly"/>
</dbReference>
<dbReference type="Proteomes" id="UP000008711">
    <property type="component" value="Unassembled WGS sequence"/>
</dbReference>
<dbReference type="GO" id="GO:0016020">
    <property type="term" value="C:membrane"/>
    <property type="evidence" value="ECO:0000250"/>
    <property type="project" value="UniProtKB"/>
</dbReference>
<dbReference type="GO" id="GO:0005886">
    <property type="term" value="C:plasma membrane"/>
    <property type="evidence" value="ECO:0007669"/>
    <property type="project" value="UniProtKB-SubCell"/>
</dbReference>
<dbReference type="GO" id="GO:0047555">
    <property type="term" value="F:3',5'-cyclic-GMP phosphodiesterase activity"/>
    <property type="evidence" value="ECO:0000250"/>
    <property type="project" value="UniProtKB"/>
</dbReference>
<dbReference type="GO" id="GO:0046872">
    <property type="term" value="F:metal ion binding"/>
    <property type="evidence" value="ECO:0007669"/>
    <property type="project" value="UniProtKB-KW"/>
</dbReference>
<dbReference type="GO" id="GO:0046068">
    <property type="term" value="P:cGMP metabolic process"/>
    <property type="evidence" value="ECO:0000250"/>
    <property type="project" value="UniProtKB"/>
</dbReference>
<dbReference type="GO" id="GO:0007165">
    <property type="term" value="P:signal transduction"/>
    <property type="evidence" value="ECO:0007669"/>
    <property type="project" value="InterPro"/>
</dbReference>
<dbReference type="CDD" id="cd00077">
    <property type="entry name" value="HDc"/>
    <property type="match status" value="1"/>
</dbReference>
<dbReference type="FunFam" id="1.10.1300.10:FF:000003">
    <property type="entry name" value="Phosphodiesterase"/>
    <property type="match status" value="1"/>
</dbReference>
<dbReference type="FunFam" id="3.30.450.40:FF:000031">
    <property type="entry name" value="Phosphodiesterase"/>
    <property type="match status" value="1"/>
</dbReference>
<dbReference type="Gene3D" id="3.30.450.40">
    <property type="match status" value="2"/>
</dbReference>
<dbReference type="Gene3D" id="1.10.1300.10">
    <property type="entry name" value="3'5'-cyclic nucleotide phosphodiesterase, catalytic domain"/>
    <property type="match status" value="1"/>
</dbReference>
<dbReference type="InterPro" id="IPR003018">
    <property type="entry name" value="GAF"/>
</dbReference>
<dbReference type="InterPro" id="IPR029016">
    <property type="entry name" value="GAF-like_dom_sf"/>
</dbReference>
<dbReference type="InterPro" id="IPR003607">
    <property type="entry name" value="HD/PDEase_dom"/>
</dbReference>
<dbReference type="InterPro" id="IPR023088">
    <property type="entry name" value="PDEase"/>
</dbReference>
<dbReference type="InterPro" id="IPR002073">
    <property type="entry name" value="PDEase_catalytic_dom"/>
</dbReference>
<dbReference type="InterPro" id="IPR036971">
    <property type="entry name" value="PDEase_catalytic_dom_sf"/>
</dbReference>
<dbReference type="InterPro" id="IPR023174">
    <property type="entry name" value="PDEase_CS"/>
</dbReference>
<dbReference type="PANTHER" id="PTHR11347">
    <property type="entry name" value="CYCLIC NUCLEOTIDE PHOSPHODIESTERASE"/>
    <property type="match status" value="1"/>
</dbReference>
<dbReference type="Pfam" id="PF01590">
    <property type="entry name" value="GAF"/>
    <property type="match status" value="2"/>
</dbReference>
<dbReference type="Pfam" id="PF00233">
    <property type="entry name" value="PDEase_I"/>
    <property type="match status" value="1"/>
</dbReference>
<dbReference type="PRINTS" id="PR00387">
    <property type="entry name" value="PDIESTERASE1"/>
</dbReference>
<dbReference type="SMART" id="SM00065">
    <property type="entry name" value="GAF"/>
    <property type="match status" value="2"/>
</dbReference>
<dbReference type="SMART" id="SM00471">
    <property type="entry name" value="HDc"/>
    <property type="match status" value="1"/>
</dbReference>
<dbReference type="SUPFAM" id="SSF55781">
    <property type="entry name" value="GAF domain-like"/>
    <property type="match status" value="2"/>
</dbReference>
<dbReference type="SUPFAM" id="SSF109604">
    <property type="entry name" value="HD-domain/PDEase-like"/>
    <property type="match status" value="1"/>
</dbReference>
<dbReference type="PROSITE" id="PS00126">
    <property type="entry name" value="PDEASE_I_1"/>
    <property type="match status" value="1"/>
</dbReference>
<dbReference type="PROSITE" id="PS51845">
    <property type="entry name" value="PDEASE_I_2"/>
    <property type="match status" value="1"/>
</dbReference>
<reference evidence="6" key="1">
    <citation type="journal article" date="2007" name="Nature">
        <title>Evolution of genes and genomes on the Drosophila phylogeny.</title>
        <authorList>
            <consortium name="Drosophila 12 genomes consortium"/>
        </authorList>
    </citation>
    <scope>NUCLEOTIDE SEQUENCE [LARGE SCALE GENOMIC DNA]</scope>
    <source>
        <strain evidence="6">Tucson 14021-0224.01</strain>
    </source>
</reference>
<gene>
    <name evidence="2" type="primary">Pde6</name>
    <name type="ORF">GG21262</name>
</gene>
<accession>B3P3K2</accession>
<name>PDE6_DROER</name>
<keyword id="KW-1003">Cell membrane</keyword>
<keyword id="KW-0140">cGMP</keyword>
<keyword id="KW-0378">Hydrolase</keyword>
<keyword id="KW-0449">Lipoprotein</keyword>
<keyword id="KW-0472">Membrane</keyword>
<keyword id="KW-0479">Metal-binding</keyword>
<keyword id="KW-0488">Methylation</keyword>
<keyword id="KW-0636">Prenylation</keyword>
<keyword id="KW-0677">Repeat</keyword>
<feature type="chain" id="PRO_0000363686" description="cGMP-specific 3',5'-cyclic phosphodiesterase">
    <location>
        <begin position="1"/>
        <end position="1128"/>
    </location>
</feature>
<feature type="propeptide" id="PRO_0000363687" description="Removed in mature form" evidence="2">
    <location>
        <begin position="1129"/>
        <end position="1131"/>
    </location>
</feature>
<feature type="domain" description="GAF 1" evidence="3">
    <location>
        <begin position="255"/>
        <end position="412"/>
    </location>
</feature>
<feature type="domain" description="GAF 2" evidence="3">
    <location>
        <begin position="444"/>
        <end position="625"/>
    </location>
</feature>
<feature type="domain" description="PDEase" evidence="4">
    <location>
        <begin position="655"/>
        <end position="978"/>
    </location>
</feature>
<feature type="region of interest" description="Disordered" evidence="5">
    <location>
        <begin position="1"/>
        <end position="26"/>
    </location>
</feature>
<feature type="region of interest" description="Disordered" evidence="5">
    <location>
        <begin position="42"/>
        <end position="150"/>
    </location>
</feature>
<feature type="region of interest" description="Disordered" evidence="5">
    <location>
        <begin position="1019"/>
        <end position="1048"/>
    </location>
</feature>
<feature type="region of interest" description="Disordered" evidence="5">
    <location>
        <begin position="1078"/>
        <end position="1131"/>
    </location>
</feature>
<feature type="compositionally biased region" description="Low complexity" evidence="5">
    <location>
        <begin position="42"/>
        <end position="63"/>
    </location>
</feature>
<feature type="compositionally biased region" description="Polar residues" evidence="5">
    <location>
        <begin position="75"/>
        <end position="86"/>
    </location>
</feature>
<feature type="compositionally biased region" description="Low complexity" evidence="5">
    <location>
        <begin position="110"/>
        <end position="136"/>
    </location>
</feature>
<feature type="compositionally biased region" description="Basic and acidic residues" evidence="5">
    <location>
        <begin position="1024"/>
        <end position="1035"/>
    </location>
</feature>
<feature type="compositionally biased region" description="Basic and acidic residues" evidence="5">
    <location>
        <begin position="1078"/>
        <end position="1088"/>
    </location>
</feature>
<feature type="compositionally biased region" description="Low complexity" evidence="5">
    <location>
        <begin position="1097"/>
        <end position="1117"/>
    </location>
</feature>
<feature type="compositionally biased region" description="Basic residues" evidence="5">
    <location>
        <begin position="1121"/>
        <end position="1131"/>
    </location>
</feature>
<feature type="active site" description="Proton donor" evidence="1">
    <location>
        <position position="731"/>
    </location>
</feature>
<feature type="binding site" evidence="1">
    <location>
        <position position="735"/>
    </location>
    <ligand>
        <name>a divalent metal cation</name>
        <dbReference type="ChEBI" id="CHEBI:60240"/>
        <label>1</label>
    </ligand>
</feature>
<feature type="binding site" evidence="1">
    <location>
        <position position="771"/>
    </location>
    <ligand>
        <name>a divalent metal cation</name>
        <dbReference type="ChEBI" id="CHEBI:60240"/>
        <label>1</label>
    </ligand>
</feature>
<feature type="binding site" evidence="1">
    <location>
        <position position="772"/>
    </location>
    <ligand>
        <name>a divalent metal cation</name>
        <dbReference type="ChEBI" id="CHEBI:60240"/>
        <label>1</label>
    </ligand>
</feature>
<feature type="binding site" evidence="1">
    <location>
        <position position="772"/>
    </location>
    <ligand>
        <name>a divalent metal cation</name>
        <dbReference type="ChEBI" id="CHEBI:60240"/>
        <label>2</label>
    </ligand>
</feature>
<feature type="binding site" evidence="1">
    <location>
        <position position="882"/>
    </location>
    <ligand>
        <name>a divalent metal cation</name>
        <dbReference type="ChEBI" id="CHEBI:60240"/>
        <label>1</label>
    </ligand>
</feature>
<feature type="modified residue" description="Cysteine methyl ester" evidence="2">
    <location>
        <position position="1128"/>
    </location>
</feature>
<feature type="lipid moiety-binding region" description="S-farnesyl cysteine" evidence="2">
    <location>
        <position position="1128"/>
    </location>
</feature>
<proteinExistence type="inferred from homology"/>
<evidence type="ECO:0000250" key="1"/>
<evidence type="ECO:0000250" key="2">
    <source>
        <dbReference type="UniProtKB" id="Q9VFI9"/>
    </source>
</evidence>
<evidence type="ECO:0000255" key="3"/>
<evidence type="ECO:0000255" key="4">
    <source>
        <dbReference type="PROSITE-ProRule" id="PRU01192"/>
    </source>
</evidence>
<evidence type="ECO:0000256" key="5">
    <source>
        <dbReference type="SAM" id="MobiDB-lite"/>
    </source>
</evidence>
<evidence type="ECO:0000312" key="6">
    <source>
        <dbReference type="EMBL" id="EDV48890.1"/>
    </source>
</evidence>